<keyword id="KW-0963">Cytoplasm</keyword>
<keyword id="KW-0238">DNA-binding</keyword>
<keyword id="KW-0677">Repeat</keyword>
<keyword id="KW-0804">Transcription</keyword>
<keyword id="KW-0805">Transcription regulation</keyword>
<feature type="chain" id="PRO_1000083998" description="Transcriptional regulator MraZ">
    <location>
        <begin position="1"/>
        <end position="143"/>
    </location>
</feature>
<feature type="domain" description="SpoVT-AbrB 1" evidence="2">
    <location>
        <begin position="5"/>
        <end position="47"/>
    </location>
</feature>
<feature type="domain" description="SpoVT-AbrB 2" evidence="2">
    <location>
        <begin position="76"/>
        <end position="119"/>
    </location>
</feature>
<name>MRAZ_CLASE</name>
<dbReference type="EMBL" id="AM849034">
    <property type="protein sequence ID" value="CAQ01475.1"/>
    <property type="molecule type" value="Genomic_DNA"/>
</dbReference>
<dbReference type="RefSeq" id="WP_012038555.1">
    <property type="nucleotide sequence ID" value="NZ_MZMN01000003.1"/>
</dbReference>
<dbReference type="SMR" id="B0RI48"/>
<dbReference type="STRING" id="31964.CMS1364"/>
<dbReference type="GeneID" id="92983634"/>
<dbReference type="KEGG" id="cms:CMS1364"/>
<dbReference type="eggNOG" id="COG2001">
    <property type="taxonomic scope" value="Bacteria"/>
</dbReference>
<dbReference type="HOGENOM" id="CLU_107907_0_5_11"/>
<dbReference type="OrthoDB" id="9807753at2"/>
<dbReference type="Proteomes" id="UP000001318">
    <property type="component" value="Chromosome"/>
</dbReference>
<dbReference type="GO" id="GO:0005737">
    <property type="term" value="C:cytoplasm"/>
    <property type="evidence" value="ECO:0007669"/>
    <property type="project" value="UniProtKB-UniRule"/>
</dbReference>
<dbReference type="GO" id="GO:0009295">
    <property type="term" value="C:nucleoid"/>
    <property type="evidence" value="ECO:0007669"/>
    <property type="project" value="UniProtKB-SubCell"/>
</dbReference>
<dbReference type="GO" id="GO:0003700">
    <property type="term" value="F:DNA-binding transcription factor activity"/>
    <property type="evidence" value="ECO:0007669"/>
    <property type="project" value="UniProtKB-UniRule"/>
</dbReference>
<dbReference type="GO" id="GO:0000976">
    <property type="term" value="F:transcription cis-regulatory region binding"/>
    <property type="evidence" value="ECO:0007669"/>
    <property type="project" value="TreeGrafter"/>
</dbReference>
<dbReference type="GO" id="GO:2000143">
    <property type="term" value="P:negative regulation of DNA-templated transcription initiation"/>
    <property type="evidence" value="ECO:0007669"/>
    <property type="project" value="TreeGrafter"/>
</dbReference>
<dbReference type="CDD" id="cd16321">
    <property type="entry name" value="MraZ_C"/>
    <property type="match status" value="1"/>
</dbReference>
<dbReference type="CDD" id="cd16320">
    <property type="entry name" value="MraZ_N"/>
    <property type="match status" value="1"/>
</dbReference>
<dbReference type="Gene3D" id="3.40.1550.20">
    <property type="entry name" value="Transcriptional regulator MraZ domain"/>
    <property type="match status" value="1"/>
</dbReference>
<dbReference type="HAMAP" id="MF_01008">
    <property type="entry name" value="MraZ"/>
    <property type="match status" value="1"/>
</dbReference>
<dbReference type="InterPro" id="IPR003444">
    <property type="entry name" value="MraZ"/>
</dbReference>
<dbReference type="InterPro" id="IPR035644">
    <property type="entry name" value="MraZ_C"/>
</dbReference>
<dbReference type="InterPro" id="IPR020603">
    <property type="entry name" value="MraZ_dom"/>
</dbReference>
<dbReference type="InterPro" id="IPR035642">
    <property type="entry name" value="MraZ_N"/>
</dbReference>
<dbReference type="InterPro" id="IPR038619">
    <property type="entry name" value="MraZ_sf"/>
</dbReference>
<dbReference type="InterPro" id="IPR007159">
    <property type="entry name" value="SpoVT-AbrB_dom"/>
</dbReference>
<dbReference type="InterPro" id="IPR037914">
    <property type="entry name" value="SpoVT-AbrB_sf"/>
</dbReference>
<dbReference type="NCBIfam" id="TIGR00242">
    <property type="entry name" value="division/cell wall cluster transcriptional repressor MraZ"/>
    <property type="match status" value="1"/>
</dbReference>
<dbReference type="PANTHER" id="PTHR34701">
    <property type="entry name" value="TRANSCRIPTIONAL REGULATOR MRAZ"/>
    <property type="match status" value="1"/>
</dbReference>
<dbReference type="PANTHER" id="PTHR34701:SF1">
    <property type="entry name" value="TRANSCRIPTIONAL REGULATOR MRAZ"/>
    <property type="match status" value="1"/>
</dbReference>
<dbReference type="Pfam" id="PF02381">
    <property type="entry name" value="MraZ"/>
    <property type="match status" value="2"/>
</dbReference>
<dbReference type="SUPFAM" id="SSF89447">
    <property type="entry name" value="AbrB/MazE/MraZ-like"/>
    <property type="match status" value="1"/>
</dbReference>
<dbReference type="PROSITE" id="PS51740">
    <property type="entry name" value="SPOVT_ABRB"/>
    <property type="match status" value="2"/>
</dbReference>
<evidence type="ECO:0000255" key="1">
    <source>
        <dbReference type="HAMAP-Rule" id="MF_01008"/>
    </source>
</evidence>
<evidence type="ECO:0000255" key="2">
    <source>
        <dbReference type="PROSITE-ProRule" id="PRU01076"/>
    </source>
</evidence>
<comment type="subunit">
    <text evidence="1">Forms oligomers.</text>
</comment>
<comment type="subcellular location">
    <subcellularLocation>
        <location evidence="1">Cytoplasm</location>
        <location evidence="1">Nucleoid</location>
    </subcellularLocation>
</comment>
<comment type="similarity">
    <text evidence="1">Belongs to the MraZ family.</text>
</comment>
<protein>
    <recommendedName>
        <fullName>Transcriptional regulator MraZ</fullName>
    </recommendedName>
</protein>
<reference key="1">
    <citation type="journal article" date="2008" name="J. Bacteriol.">
        <title>Genome of the actinomycete plant pathogen Clavibacter michiganensis subsp. sepedonicus suggests recent niche adaptation.</title>
        <authorList>
            <person name="Bentley S.D."/>
            <person name="Corton C."/>
            <person name="Brown S.E."/>
            <person name="Barron A."/>
            <person name="Clark L."/>
            <person name="Doggett J."/>
            <person name="Harris B."/>
            <person name="Ormond D."/>
            <person name="Quail M.A."/>
            <person name="May G."/>
            <person name="Francis D."/>
            <person name="Knudson D."/>
            <person name="Parkhill J."/>
            <person name="Ishimaru C.A."/>
        </authorList>
    </citation>
    <scope>NUCLEOTIDE SEQUENCE [LARGE SCALE GENOMIC DNA]</scope>
    <source>
        <strain>ATCC 33113 / DSM 20744 / JCM 9667 / LMG 2889 / ICMP 2535 / C-1</strain>
    </source>
</reference>
<gene>
    <name evidence="1" type="primary">mraZ</name>
    <name type="ordered locus">CMS1364</name>
</gene>
<organism>
    <name type="scientific">Clavibacter sepedonicus</name>
    <name type="common">Clavibacter michiganensis subsp. sepedonicus</name>
    <dbReference type="NCBI Taxonomy" id="31964"/>
    <lineage>
        <taxon>Bacteria</taxon>
        <taxon>Bacillati</taxon>
        <taxon>Actinomycetota</taxon>
        <taxon>Actinomycetes</taxon>
        <taxon>Micrococcales</taxon>
        <taxon>Microbacteriaceae</taxon>
        <taxon>Clavibacter</taxon>
    </lineage>
</organism>
<sequence length="143" mass="16176">MFLGTHSPRLDDKGRLILPAKFRDELEGGVVMTRGQDRCIYVFTTREFEELHDRMRQAPLASKQARDYMRVFLSGANAETPDKQHRITIPQALRTYAGLDRELAVIGAGSRVEIWDAGTWDEYLTANESAFADTAEEVIPGLF</sequence>
<accession>B0RI48</accession>
<proteinExistence type="inferred from homology"/>